<proteinExistence type="evidence at transcript level"/>
<reference key="1">
    <citation type="journal article" date="2010" name="Zoology">
        <title>Transcriptome analysis of the venom glands of the Chinese wolf spider Lycosa singoriensis.</title>
        <authorList>
            <person name="Zhang Y."/>
            <person name="Chen J."/>
            <person name="Tang X."/>
            <person name="Wang F."/>
            <person name="Jiang L."/>
            <person name="Xiong X."/>
            <person name="Wang M."/>
            <person name="Rong M."/>
            <person name="Liu Z."/>
            <person name="Liang S."/>
        </authorList>
    </citation>
    <scope>NUCLEOTIDE SEQUENCE [LARGE SCALE MRNA]</scope>
    <source>
        <tissue>Venom gland</tissue>
    </source>
</reference>
<feature type="signal peptide" evidence="2">
    <location>
        <begin position="1"/>
        <end position="20"/>
    </location>
</feature>
<feature type="propeptide" id="PRO_0000401633" evidence="1">
    <location>
        <begin position="21"/>
        <end position="44"/>
    </location>
</feature>
<feature type="chain" id="PRO_0000401634" description="U3-lycotoxin-Ls1d">
    <location>
        <begin position="45"/>
        <end position="115"/>
    </location>
</feature>
<feature type="disulfide bond" evidence="1">
    <location>
        <begin position="48"/>
        <end position="63"/>
    </location>
</feature>
<feature type="disulfide bond" evidence="1">
    <location>
        <begin position="55"/>
        <end position="72"/>
    </location>
</feature>
<feature type="disulfide bond" evidence="1">
    <location>
        <begin position="62"/>
        <end position="87"/>
    </location>
</feature>
<feature type="disulfide bond" evidence="1">
    <location>
        <begin position="74"/>
        <end position="85"/>
    </location>
</feature>
<comment type="subcellular location">
    <subcellularLocation>
        <location evidence="1">Secreted</location>
    </subcellularLocation>
</comment>
<comment type="tissue specificity">
    <text>Expressed by the venom gland.</text>
</comment>
<comment type="domain">
    <text evidence="1">The presence of a 'disulfide through disulfide knot' structurally defines this protein as a knottin.</text>
</comment>
<comment type="similarity">
    <text evidence="3">Belongs to the neurotoxin 19 (CSTX) family. 01 subfamily.</text>
</comment>
<organism>
    <name type="scientific">Lycosa singoriensis</name>
    <name type="common">Wolf spider</name>
    <name type="synonym">Aranea singoriensis</name>
    <dbReference type="NCBI Taxonomy" id="434756"/>
    <lineage>
        <taxon>Eukaryota</taxon>
        <taxon>Metazoa</taxon>
        <taxon>Ecdysozoa</taxon>
        <taxon>Arthropoda</taxon>
        <taxon>Chelicerata</taxon>
        <taxon>Arachnida</taxon>
        <taxon>Araneae</taxon>
        <taxon>Araneomorphae</taxon>
        <taxon>Entelegynae</taxon>
        <taxon>Lycosoidea</taxon>
        <taxon>Lycosidae</taxon>
        <taxon>Lycosa</taxon>
    </lineage>
</organism>
<protein>
    <recommendedName>
        <fullName>U3-lycotoxin-Ls1d</fullName>
    </recommendedName>
    <alternativeName>
        <fullName>Toxin-like structure LSTX-B14</fullName>
    </alternativeName>
</protein>
<dbReference type="EMBL" id="EU925993">
    <property type="protein sequence ID" value="ACI41325.1"/>
    <property type="molecule type" value="mRNA"/>
</dbReference>
<dbReference type="EMBL" id="FM863997">
    <property type="protein sequence ID" value="CAS03595.1"/>
    <property type="molecule type" value="mRNA"/>
</dbReference>
<dbReference type="SMR" id="B6DCQ9"/>
<dbReference type="ArachnoServer" id="AS000942">
    <property type="toxin name" value="U3-lycotoxin-Ls1d"/>
</dbReference>
<dbReference type="GO" id="GO:0005576">
    <property type="term" value="C:extracellular region"/>
    <property type="evidence" value="ECO:0007669"/>
    <property type="project" value="UniProtKB-SubCell"/>
</dbReference>
<dbReference type="GO" id="GO:0090729">
    <property type="term" value="F:toxin activity"/>
    <property type="evidence" value="ECO:0007669"/>
    <property type="project" value="UniProtKB-KW"/>
</dbReference>
<dbReference type="InterPro" id="IPR019553">
    <property type="entry name" value="Spider_toxin_CSTX_knottin"/>
</dbReference>
<dbReference type="InterPro" id="IPR011142">
    <property type="entry name" value="Spider_toxin_CSTX_Knottin_CS"/>
</dbReference>
<dbReference type="Pfam" id="PF10530">
    <property type="entry name" value="Toxin_35"/>
    <property type="match status" value="1"/>
</dbReference>
<dbReference type="PROSITE" id="PS60029">
    <property type="entry name" value="SPIDER_CSTX"/>
    <property type="match status" value="1"/>
</dbReference>
<keyword id="KW-1015">Disulfide bond</keyword>
<keyword id="KW-0960">Knottin</keyword>
<keyword id="KW-0964">Secreted</keyword>
<keyword id="KW-0732">Signal</keyword>
<keyword id="KW-0800">Toxin</keyword>
<name>TX314_LYCSI</name>
<sequence length="115" mass="13272">MKFVLLFGVLLVTLFSYSSAEMLDDFDQADEDELLSLIEKEEARAKECTPRFYDCSHDRHSCCRSELFKDVCTCFYPEGGDNEVCTCQQPKHLKYMEKAADKAKKFGGKTKKWFG</sequence>
<evidence type="ECO:0000250" key="1"/>
<evidence type="ECO:0000255" key="2"/>
<evidence type="ECO:0000305" key="3"/>
<accession>B6DCQ9</accession>